<organism>
    <name type="scientific">Homo sapiens</name>
    <name type="common">Human</name>
    <dbReference type="NCBI Taxonomy" id="9606"/>
    <lineage>
        <taxon>Eukaryota</taxon>
        <taxon>Metazoa</taxon>
        <taxon>Chordata</taxon>
        <taxon>Craniata</taxon>
        <taxon>Vertebrata</taxon>
        <taxon>Euteleostomi</taxon>
        <taxon>Mammalia</taxon>
        <taxon>Eutheria</taxon>
        <taxon>Euarchontoglires</taxon>
        <taxon>Primates</taxon>
        <taxon>Haplorrhini</taxon>
        <taxon>Catarrhini</taxon>
        <taxon>Hominidae</taxon>
        <taxon>Homo</taxon>
    </lineage>
</organism>
<accession>Q9NR83</accession>
<accession>Q2PHL5</accession>
<accession>Q6F6I6</accession>
<accession>Q6F6I7</accession>
<accession>Q6GTK5</accession>
<accession>Q8TAH5</accession>
<accession>Q8WVW7</accession>
<accession>Q96QD3</accession>
<accession>Q9BV85</accession>
<comment type="function">
    <text evidence="4 5">Transcription factor involved in SLC2A4 and HD gene transactivation. Binds to the consensus sequence 5'-GCCGGCG-3'.</text>
</comment>
<comment type="subunit">
    <text evidence="5">Interacts with MEF2A.</text>
</comment>
<comment type="subcellular location">
    <subcellularLocation>
        <location>Cytoplasm</location>
    </subcellularLocation>
    <subcellularLocation>
        <location>Nucleus</location>
    </subcellularLocation>
    <text>Shuttles between the cytoplasm and the nucleus.</text>
</comment>
<comment type="alternative products">
    <event type="alternative splicing"/>
    <isoform>
        <id>Q9NR83-1</id>
        <name>1</name>
        <sequence type="displayed"/>
    </isoform>
    <isoform>
        <id>Q9NR83-4</id>
        <name>2</name>
        <sequence type="described" ref="VSP_055908"/>
    </isoform>
    <isoform>
        <id>Q9NR83-3</id>
        <name>3</name>
        <sequence type="described" ref="VSP_055909"/>
    </isoform>
</comment>
<comment type="tissue specificity">
    <text evidence="4 5">According to PubMed:14630949, expressed in heart, skeletal muscle, liver, kidney and pancreas; undetectable in lung, placenta or brain. According to PubMed:14625278, ubiquitously expressed, with lowest expression in brain and ileum.</text>
</comment>
<comment type="sequence caution" evidence="9">
    <conflict type="erroneous initiation">
        <sequence resource="EMBL-CDS" id="AAH17446"/>
    </conflict>
    <text>Extended N-terminus.</text>
</comment>
<comment type="sequence caution" evidence="9">
    <conflict type="miscellaneous discrepancy">
        <sequence resource="EMBL-CDS" id="BAD29732"/>
    </conflict>
    <text>Probable cloning artifact.</text>
</comment>
<feature type="chain" id="PRO_0000047208" description="SLC2A4 regulator">
    <location>
        <begin position="1"/>
        <end position="387"/>
    </location>
</feature>
<feature type="zinc finger region" description="C2H2-type" evidence="1">
    <location>
        <begin position="200"/>
        <end position="225"/>
    </location>
</feature>
<feature type="region of interest" description="Disordered" evidence="2">
    <location>
        <begin position="1"/>
        <end position="97"/>
    </location>
</feature>
<feature type="region of interest" description="Disordered" evidence="2">
    <location>
        <begin position="139"/>
        <end position="179"/>
    </location>
</feature>
<feature type="region of interest" description="Disordered" evidence="2">
    <location>
        <begin position="283"/>
        <end position="305"/>
    </location>
</feature>
<feature type="short sequence motif" description="Nuclear export signal">
    <location>
        <begin position="253"/>
        <end position="263"/>
    </location>
</feature>
<feature type="short sequence motif" description="Nuclear localization signal" evidence="9">
    <location>
        <begin position="351"/>
        <end position="354"/>
    </location>
</feature>
<feature type="compositionally biased region" description="Low complexity" evidence="2">
    <location>
        <begin position="27"/>
        <end position="36"/>
    </location>
</feature>
<feature type="compositionally biased region" description="Pro residues" evidence="2">
    <location>
        <begin position="285"/>
        <end position="303"/>
    </location>
</feature>
<feature type="modified residue" description="Phosphoserine" evidence="10">
    <location>
        <position position="264"/>
    </location>
</feature>
<feature type="modified residue" description="Phosphoserine" evidence="10">
    <location>
        <position position="268"/>
    </location>
</feature>
<feature type="splice variant" id="VSP_055908" description="In isoform 2." evidence="8">
    <location>
        <begin position="1"/>
        <end position="198"/>
    </location>
</feature>
<feature type="splice variant" id="VSP_055909" description="In isoform 3." evidence="7">
    <location>
        <begin position="1"/>
        <end position="105"/>
    </location>
</feature>
<feature type="sequence variant" id="VAR_025005" description="In dbSNP:rs8957." evidence="3 4 6">
    <original>E</original>
    <variation>D</variation>
    <location>
        <position position="233"/>
    </location>
</feature>
<feature type="mutagenesis site" description="Nuclear; when associated with A-260." evidence="4">
    <original>L</original>
    <variation>A</variation>
    <location>
        <position position="257"/>
    </location>
</feature>
<feature type="mutagenesis site" description="Nuclear; when associated with A-257." evidence="4">
    <original>L</original>
    <variation>A</variation>
    <location>
        <position position="260"/>
    </location>
</feature>
<feature type="mutagenesis site" description="Cytoplasmic; when associated with A-276." evidence="4">
    <original>F</original>
    <variation>A</variation>
    <location>
        <position position="273"/>
    </location>
</feature>
<feature type="mutagenesis site" description="Cytoplasmic; when associated with A-273." evidence="4">
    <original>L</original>
    <variation>A</variation>
    <location>
        <position position="276"/>
    </location>
</feature>
<feature type="sequence conflict" description="In Ref. 1; AAF97516." evidence="9" ref="1">
    <original>SPLLL</original>
    <variation>KPSPS</variation>
    <location>
        <begin position="117"/>
        <end position="121"/>
    </location>
</feature>
<feature type="sequence conflict" description="In Ref. 3; BAD29733." evidence="9" ref="3">
    <original>A</original>
    <variation>V</variation>
    <location>
        <position position="162"/>
    </location>
</feature>
<feature type="helix" evidence="11">
    <location>
        <begin position="360"/>
        <end position="364"/>
    </location>
</feature>
<feature type="helix" evidence="11">
    <location>
        <begin position="366"/>
        <end position="371"/>
    </location>
</feature>
<feature type="helix" evidence="11">
    <location>
        <begin position="374"/>
        <end position="377"/>
    </location>
</feature>
<feature type="strand" evidence="11">
    <location>
        <begin position="383"/>
        <end position="385"/>
    </location>
</feature>
<keyword id="KW-0002">3D-structure</keyword>
<keyword id="KW-0025">Alternative splicing</keyword>
<keyword id="KW-0963">Cytoplasm</keyword>
<keyword id="KW-0238">DNA-binding</keyword>
<keyword id="KW-0479">Metal-binding</keyword>
<keyword id="KW-0539">Nucleus</keyword>
<keyword id="KW-0597">Phosphoprotein</keyword>
<keyword id="KW-1267">Proteomics identification</keyword>
<keyword id="KW-1185">Reference proteome</keyword>
<keyword id="KW-0804">Transcription</keyword>
<keyword id="KW-0805">Transcription regulation</keyword>
<keyword id="KW-0862">Zinc</keyword>
<keyword id="KW-0863">Zinc-finger</keyword>
<evidence type="ECO:0000255" key="1">
    <source>
        <dbReference type="PROSITE-ProRule" id="PRU00042"/>
    </source>
</evidence>
<evidence type="ECO:0000256" key="2">
    <source>
        <dbReference type="SAM" id="MobiDB-lite"/>
    </source>
</evidence>
<evidence type="ECO:0000269" key="3">
    <source>
    </source>
</evidence>
<evidence type="ECO:0000269" key="4">
    <source>
    </source>
</evidence>
<evidence type="ECO:0000269" key="5">
    <source>
    </source>
</evidence>
<evidence type="ECO:0000269" key="6">
    <source>
    </source>
</evidence>
<evidence type="ECO:0000303" key="7">
    <source>
    </source>
</evidence>
<evidence type="ECO:0000303" key="8">
    <source>
    </source>
</evidence>
<evidence type="ECO:0000305" key="9"/>
<evidence type="ECO:0007744" key="10">
    <source>
    </source>
</evidence>
<evidence type="ECO:0007829" key="11">
    <source>
        <dbReference type="PDB" id="7DTA"/>
    </source>
</evidence>
<proteinExistence type="evidence at protein level"/>
<name>S2A4R_HUMAN</name>
<gene>
    <name type="primary">SLC2A4RG</name>
    <name type="synonym">HDBP1</name>
</gene>
<protein>
    <recommendedName>
        <fullName>SLC2A4 regulator</fullName>
    </recommendedName>
    <alternativeName>
        <fullName>GLUT4 enhancer factor</fullName>
        <shortName>GEF</shortName>
    </alternativeName>
    <alternativeName>
        <fullName>Huntington disease gene regulatory region-binding protein 1</fullName>
        <shortName>HDBP-1</shortName>
    </alternativeName>
</protein>
<reference key="1">
    <citation type="journal article" date="2000" name="J. Biol. Chem.">
        <title>Identification of a 30-base pair regulatory element and novel DNA binding protein that regulates the human GLUT4 promoter in transgenic mice.</title>
        <authorList>
            <person name="Oshel K.M."/>
            <person name="Knight J.B."/>
            <person name="Cao K.T."/>
            <person name="Thai M.V."/>
            <person name="Olson A.L."/>
        </authorList>
    </citation>
    <scope>NUCLEOTIDE SEQUENCE [MRNA] (ISOFORM 1)</scope>
    <scope>VARIANT ASP-233</scope>
    <source>
        <tissue>Skeletal muscle</tissue>
    </source>
</reference>
<reference key="2">
    <citation type="submission" date="2001-02" db="EMBL/GenBank/DDBJ databases">
        <authorList>
            <person name="Olson A.L."/>
            <person name="Oshel K.M."/>
        </authorList>
    </citation>
    <scope>SEQUENCE REVISION</scope>
</reference>
<reference key="3">
    <citation type="journal article" date="2004" name="J. Biol. Chem.">
        <title>Novel nuclear shuttle proteins, HDBP1 and HDBP2, bind to neuronal cell-specific cis-regulatory element in the promoter for the human Huntington's disease gene.</title>
        <authorList>
            <person name="Tanaka K."/>
            <person name="Shouguchi-Miyata J."/>
            <person name="Miyamoto N."/>
            <person name="Ikeda J.-E."/>
        </authorList>
    </citation>
    <scope>NUCLEOTIDE SEQUENCE [MRNA] (ISOFORMS 1 AND 3)</scope>
    <scope>VARIANT ASP-233</scope>
    <scope>FUNCTION</scope>
    <scope>TISSUE SPECIFICITY</scope>
    <scope>SUBCELLULAR LOCATION</scope>
    <scope>MUTAGENESIS OF LEU-257; LEU-260; PHE-273 AND LEU-276</scope>
    <source>
        <tissue>Testis</tissue>
    </source>
</reference>
<reference key="4">
    <citation type="journal article" date="2001" name="Nature">
        <title>The DNA sequence and comparative analysis of human chromosome 20.</title>
        <authorList>
            <person name="Deloukas P."/>
            <person name="Matthews L.H."/>
            <person name="Ashurst J.L."/>
            <person name="Burton J."/>
            <person name="Gilbert J.G.R."/>
            <person name="Jones M."/>
            <person name="Stavrides G."/>
            <person name="Almeida J.P."/>
            <person name="Babbage A.K."/>
            <person name="Bagguley C.L."/>
            <person name="Bailey J."/>
            <person name="Barlow K.F."/>
            <person name="Bates K.N."/>
            <person name="Beard L.M."/>
            <person name="Beare D.M."/>
            <person name="Beasley O.P."/>
            <person name="Bird C.P."/>
            <person name="Blakey S.E."/>
            <person name="Bridgeman A.M."/>
            <person name="Brown A.J."/>
            <person name="Buck D."/>
            <person name="Burrill W.D."/>
            <person name="Butler A.P."/>
            <person name="Carder C."/>
            <person name="Carter N.P."/>
            <person name="Chapman J.C."/>
            <person name="Clamp M."/>
            <person name="Clark G."/>
            <person name="Clark L.N."/>
            <person name="Clark S.Y."/>
            <person name="Clee C.M."/>
            <person name="Clegg S."/>
            <person name="Cobley V.E."/>
            <person name="Collier R.E."/>
            <person name="Connor R.E."/>
            <person name="Corby N.R."/>
            <person name="Coulson A."/>
            <person name="Coville G.J."/>
            <person name="Deadman R."/>
            <person name="Dhami P.D."/>
            <person name="Dunn M."/>
            <person name="Ellington A.G."/>
            <person name="Frankland J.A."/>
            <person name="Fraser A."/>
            <person name="French L."/>
            <person name="Garner P."/>
            <person name="Grafham D.V."/>
            <person name="Griffiths C."/>
            <person name="Griffiths M.N.D."/>
            <person name="Gwilliam R."/>
            <person name="Hall R.E."/>
            <person name="Hammond S."/>
            <person name="Harley J.L."/>
            <person name="Heath P.D."/>
            <person name="Ho S."/>
            <person name="Holden J.L."/>
            <person name="Howden P.J."/>
            <person name="Huckle E."/>
            <person name="Hunt A.R."/>
            <person name="Hunt S.E."/>
            <person name="Jekosch K."/>
            <person name="Johnson C.M."/>
            <person name="Johnson D."/>
            <person name="Kay M.P."/>
            <person name="Kimberley A.M."/>
            <person name="King A."/>
            <person name="Knights A."/>
            <person name="Laird G.K."/>
            <person name="Lawlor S."/>
            <person name="Lehvaeslaiho M.H."/>
            <person name="Leversha M.A."/>
            <person name="Lloyd C."/>
            <person name="Lloyd D.M."/>
            <person name="Lovell J.D."/>
            <person name="Marsh V.L."/>
            <person name="Martin S.L."/>
            <person name="McConnachie L.J."/>
            <person name="McLay K."/>
            <person name="McMurray A.A."/>
            <person name="Milne S.A."/>
            <person name="Mistry D."/>
            <person name="Moore M.J.F."/>
            <person name="Mullikin J.C."/>
            <person name="Nickerson T."/>
            <person name="Oliver K."/>
            <person name="Parker A."/>
            <person name="Patel R."/>
            <person name="Pearce T.A.V."/>
            <person name="Peck A.I."/>
            <person name="Phillimore B.J.C.T."/>
            <person name="Prathalingam S.R."/>
            <person name="Plumb R.W."/>
            <person name="Ramsay H."/>
            <person name="Rice C.M."/>
            <person name="Ross M.T."/>
            <person name="Scott C.E."/>
            <person name="Sehra H.K."/>
            <person name="Shownkeen R."/>
            <person name="Sims S."/>
            <person name="Skuce C.D."/>
            <person name="Smith M.L."/>
            <person name="Soderlund C."/>
            <person name="Steward C.A."/>
            <person name="Sulston J.E."/>
            <person name="Swann R.M."/>
            <person name="Sycamore N."/>
            <person name="Taylor R."/>
            <person name="Tee L."/>
            <person name="Thomas D.W."/>
            <person name="Thorpe A."/>
            <person name="Tracey A."/>
            <person name="Tromans A.C."/>
            <person name="Vaudin M."/>
            <person name="Wall M."/>
            <person name="Wallis J.M."/>
            <person name="Whitehead S.L."/>
            <person name="Whittaker P."/>
            <person name="Willey D.L."/>
            <person name="Williams L."/>
            <person name="Williams S.A."/>
            <person name="Wilming L."/>
            <person name="Wray P.W."/>
            <person name="Hubbard T."/>
            <person name="Durbin R.M."/>
            <person name="Bentley D.R."/>
            <person name="Beck S."/>
            <person name="Rogers J."/>
        </authorList>
    </citation>
    <scope>NUCLEOTIDE SEQUENCE [LARGE SCALE GENOMIC DNA]</scope>
</reference>
<reference key="5">
    <citation type="journal article" date="2004" name="Genome Res.">
        <title>The status, quality, and expansion of the NIH full-length cDNA project: the Mammalian Gene Collection (MGC).</title>
        <authorList>
            <consortium name="The MGC Project Team"/>
        </authorList>
    </citation>
    <scope>NUCLEOTIDE SEQUENCE [LARGE SCALE MRNA] (ISOFORMS 1 AND 2)</scope>
    <scope>VARIANT ASP-233</scope>
    <source>
        <tissue>Ovary</tissue>
        <tissue>Placenta</tissue>
        <tissue>Prostate</tissue>
    </source>
</reference>
<reference key="6">
    <citation type="journal article" date="2003" name="Proc. Natl. Acad. Sci. U.S.A.">
        <title>Regulation of the human GLUT4 gene promoter: interaction between a transcriptional activator and myocyte enhancer factor 2A.</title>
        <authorList>
            <person name="Knight J.B."/>
            <person name="Eyster C.A."/>
            <person name="Griesel B.A."/>
            <person name="Olson A.L."/>
        </authorList>
    </citation>
    <scope>TISSUE SPECIFICITY</scope>
    <scope>SUBCELLULAR LOCATION</scope>
    <scope>INTERACTION WITH MEF2A</scope>
    <scope>FUNCTION</scope>
</reference>
<reference key="7">
    <citation type="journal article" date="2014" name="J. Proteomics">
        <title>An enzyme assisted RP-RPLC approach for in-depth analysis of human liver phosphoproteome.</title>
        <authorList>
            <person name="Bian Y."/>
            <person name="Song C."/>
            <person name="Cheng K."/>
            <person name="Dong M."/>
            <person name="Wang F."/>
            <person name="Huang J."/>
            <person name="Sun D."/>
            <person name="Wang L."/>
            <person name="Ye M."/>
            <person name="Zou H."/>
        </authorList>
    </citation>
    <scope>PHOSPHORYLATION [LARGE SCALE ANALYSIS] AT SER-264 AND SER-268</scope>
    <scope>IDENTIFICATION BY MASS SPECTROMETRY [LARGE SCALE ANALYSIS]</scope>
    <source>
        <tissue>Liver</tissue>
    </source>
</reference>
<sequence length="387" mass="41267">MERPPPRAAGRDPSALRAEAPWLRAEGPGPRAAPVTVPTPPQGSSVGGGFAGLEFARPQESEPRASDLGAPRTWTGAAAGPRTPSAHIPVPAQRATPGKARLDEVMAAAALTSLSTSPLLLGAPVAAFSPEPGLEPWKEALVRPPGSYSSSSNSGDWGWDLASDQSSPSTPSPPLPPEAAHFLFGEPTLRKRKSPAQVMFQCLWKSCGKVLSTASAMQRHIRLVHLGRQAEPEQSDGEEDFYYTELDVGVDTLTDGLSSLTPVSPTASMPPAFPRLELPELLEPPALPSPLRPPAPPLPPPPVLSTVANPQSCHSDRVYQGCLTPARLEPQPTEVGACPPALSSRIGVTLRKPRGDAKKCRKVYGMERRDLWCTACRWKKACQRFLD</sequence>
<dbReference type="EMBL" id="AF249267">
    <property type="protein sequence ID" value="AAF97516.2"/>
    <property type="molecule type" value="mRNA"/>
</dbReference>
<dbReference type="EMBL" id="AB044777">
    <property type="protein sequence ID" value="BAE71373.1"/>
    <property type="molecule type" value="mRNA"/>
</dbReference>
<dbReference type="EMBL" id="AB044786">
    <property type="protein sequence ID" value="BAD29732.1"/>
    <property type="status" value="ALT_SEQ"/>
    <property type="molecule type" value="mRNA"/>
</dbReference>
<dbReference type="EMBL" id="AB052777">
    <property type="protein sequence ID" value="BAD29733.1"/>
    <property type="molecule type" value="mRNA"/>
</dbReference>
<dbReference type="EMBL" id="AL121845">
    <property type="status" value="NOT_ANNOTATED_CDS"/>
    <property type="molecule type" value="Genomic_DNA"/>
</dbReference>
<dbReference type="EMBL" id="BC001402">
    <property type="protein sequence ID" value="AAH01402.2"/>
    <property type="molecule type" value="mRNA"/>
</dbReference>
<dbReference type="EMBL" id="BC017446">
    <property type="protein sequence ID" value="AAH17446.1"/>
    <property type="status" value="ALT_INIT"/>
    <property type="molecule type" value="mRNA"/>
</dbReference>
<dbReference type="EMBL" id="BC028349">
    <property type="protein sequence ID" value="AAH28349.2"/>
    <property type="molecule type" value="mRNA"/>
</dbReference>
<dbReference type="EMBL" id="BC052306">
    <property type="protein sequence ID" value="AAH52306.1"/>
    <property type="molecule type" value="mRNA"/>
</dbReference>
<dbReference type="CCDS" id="CCDS13537.1">
    <molecule id="Q9NR83-1"/>
</dbReference>
<dbReference type="RefSeq" id="NP_064446.2">
    <molecule id="Q9NR83-1"/>
    <property type="nucleotide sequence ID" value="NM_020062.3"/>
</dbReference>
<dbReference type="PDB" id="7DTA">
    <property type="method" value="NMR"/>
    <property type="chains" value="A=355-387"/>
</dbReference>
<dbReference type="PDBsum" id="7DTA"/>
<dbReference type="SMR" id="Q9NR83"/>
<dbReference type="BioGRID" id="121193">
    <property type="interactions" value="4"/>
</dbReference>
<dbReference type="FunCoup" id="Q9NR83">
    <property type="interactions" value="852"/>
</dbReference>
<dbReference type="STRING" id="9606.ENSP00000266077"/>
<dbReference type="GlyGen" id="Q9NR83">
    <property type="glycosylation" value="4 sites"/>
</dbReference>
<dbReference type="iPTMnet" id="Q9NR83"/>
<dbReference type="PhosphoSitePlus" id="Q9NR83"/>
<dbReference type="BioMuta" id="SLC2A4RG"/>
<dbReference type="DMDM" id="85700401"/>
<dbReference type="jPOST" id="Q9NR83"/>
<dbReference type="MassIVE" id="Q9NR83"/>
<dbReference type="PaxDb" id="9606-ENSP00000266077"/>
<dbReference type="PeptideAtlas" id="Q9NR83"/>
<dbReference type="ProteomicsDB" id="82304">
    <molecule id="Q9NR83-1"/>
</dbReference>
<dbReference type="Antibodypedia" id="15361">
    <property type="antibodies" value="276 antibodies from 25 providers"/>
</dbReference>
<dbReference type="DNASU" id="56731"/>
<dbReference type="Ensembl" id="ENST00000266077.5">
    <molecule id="Q9NR83-1"/>
    <property type="protein sequence ID" value="ENSP00000266077.2"/>
    <property type="gene ID" value="ENSG00000125520.14"/>
</dbReference>
<dbReference type="GeneID" id="56731"/>
<dbReference type="KEGG" id="hsa:56731"/>
<dbReference type="MANE-Select" id="ENST00000266077.5">
    <property type="protein sequence ID" value="ENSP00000266077.2"/>
    <property type="RefSeq nucleotide sequence ID" value="NM_020062.4"/>
    <property type="RefSeq protein sequence ID" value="NP_064446.2"/>
</dbReference>
<dbReference type="UCSC" id="uc002ygq.4">
    <molecule id="Q9NR83-1"/>
    <property type="organism name" value="human"/>
</dbReference>
<dbReference type="AGR" id="HGNC:15930"/>
<dbReference type="CTD" id="56731"/>
<dbReference type="DisGeNET" id="56731"/>
<dbReference type="GeneCards" id="SLC2A4RG"/>
<dbReference type="HGNC" id="HGNC:15930">
    <property type="gene designation" value="SLC2A4RG"/>
</dbReference>
<dbReference type="HPA" id="ENSG00000125520">
    <property type="expression patterns" value="Tissue enhanced (liver)"/>
</dbReference>
<dbReference type="MIM" id="609493">
    <property type="type" value="gene"/>
</dbReference>
<dbReference type="neXtProt" id="NX_Q9NR83"/>
<dbReference type="NIAGADS" id="ENSG00000125520"/>
<dbReference type="OpenTargets" id="ENSG00000125520"/>
<dbReference type="PharmGKB" id="PA38052"/>
<dbReference type="VEuPathDB" id="HostDB:ENSG00000125520"/>
<dbReference type="eggNOG" id="ENOG502SCW3">
    <property type="taxonomic scope" value="Eukaryota"/>
</dbReference>
<dbReference type="GeneTree" id="ENSGT00940000162832"/>
<dbReference type="HOGENOM" id="CLU_032989_0_0_1"/>
<dbReference type="InParanoid" id="Q9NR83"/>
<dbReference type="OMA" id="WHRDHAY"/>
<dbReference type="OrthoDB" id="5950721at2759"/>
<dbReference type="PAN-GO" id="Q9NR83">
    <property type="GO annotations" value="4 GO annotations based on evolutionary models"/>
</dbReference>
<dbReference type="PhylomeDB" id="Q9NR83"/>
<dbReference type="TreeFam" id="TF326610"/>
<dbReference type="PathwayCommons" id="Q9NR83"/>
<dbReference type="BioGRID-ORCS" id="56731">
    <property type="hits" value="20 hits in 1159 CRISPR screens"/>
</dbReference>
<dbReference type="ChiTaRS" id="SLC2A4RG">
    <property type="organism name" value="human"/>
</dbReference>
<dbReference type="GeneWiki" id="SLC2A4RG"/>
<dbReference type="GenomeRNAi" id="56731"/>
<dbReference type="Pharos" id="Q9NR83">
    <property type="development level" value="Tbio"/>
</dbReference>
<dbReference type="PRO" id="PR:Q9NR83"/>
<dbReference type="Proteomes" id="UP000005640">
    <property type="component" value="Chromosome 20"/>
</dbReference>
<dbReference type="RNAct" id="Q9NR83">
    <property type="molecule type" value="protein"/>
</dbReference>
<dbReference type="Bgee" id="ENSG00000125520">
    <property type="expression patterns" value="Expressed in apex of heart and 174 other cell types or tissues"/>
</dbReference>
<dbReference type="GO" id="GO:0005737">
    <property type="term" value="C:cytoplasm"/>
    <property type="evidence" value="ECO:0007669"/>
    <property type="project" value="UniProtKB-SubCell"/>
</dbReference>
<dbReference type="GO" id="GO:0016607">
    <property type="term" value="C:nuclear speck"/>
    <property type="evidence" value="ECO:0000314"/>
    <property type="project" value="HPA"/>
</dbReference>
<dbReference type="GO" id="GO:0005634">
    <property type="term" value="C:nucleus"/>
    <property type="evidence" value="ECO:0000318"/>
    <property type="project" value="GO_Central"/>
</dbReference>
<dbReference type="GO" id="GO:0003700">
    <property type="term" value="F:DNA-binding transcription factor activity"/>
    <property type="evidence" value="ECO:0000314"/>
    <property type="project" value="GO_Central"/>
</dbReference>
<dbReference type="GO" id="GO:0000978">
    <property type="term" value="F:RNA polymerase II cis-regulatory region sequence-specific DNA binding"/>
    <property type="evidence" value="ECO:0000318"/>
    <property type="project" value="GO_Central"/>
</dbReference>
<dbReference type="GO" id="GO:0008270">
    <property type="term" value="F:zinc ion binding"/>
    <property type="evidence" value="ECO:0007669"/>
    <property type="project" value="UniProtKB-KW"/>
</dbReference>
<dbReference type="GO" id="GO:0006355">
    <property type="term" value="P:regulation of DNA-templated transcription"/>
    <property type="evidence" value="ECO:0000314"/>
    <property type="project" value="GO_Central"/>
</dbReference>
<dbReference type="GO" id="GO:0006357">
    <property type="term" value="P:regulation of transcription by RNA polymerase II"/>
    <property type="evidence" value="ECO:0000318"/>
    <property type="project" value="GO_Central"/>
</dbReference>
<dbReference type="InterPro" id="IPR052253">
    <property type="entry name" value="CR1/CR2-DNA-binding_regulator"/>
</dbReference>
<dbReference type="InterPro" id="IPR013087">
    <property type="entry name" value="Znf_C2H2_type"/>
</dbReference>
<dbReference type="PANTHER" id="PTHR13006">
    <property type="entry name" value="PAPILLOMAVIRUS REGULATORY FACTOR PRF-1"/>
    <property type="match status" value="1"/>
</dbReference>
<dbReference type="PANTHER" id="PTHR13006:SF8">
    <property type="entry name" value="SLC2A4 REGULATOR"/>
    <property type="match status" value="1"/>
</dbReference>
<dbReference type="SMART" id="SM01366">
    <property type="entry name" value="c-clamp"/>
    <property type="match status" value="1"/>
</dbReference>
<dbReference type="SMART" id="SM00355">
    <property type="entry name" value="ZnF_C2H2"/>
    <property type="match status" value="1"/>
</dbReference>
<dbReference type="PROSITE" id="PS00028">
    <property type="entry name" value="ZINC_FINGER_C2H2_1"/>
    <property type="match status" value="1"/>
</dbReference>
<dbReference type="PROSITE" id="PS50157">
    <property type="entry name" value="ZINC_FINGER_C2H2_2"/>
    <property type="match status" value="1"/>
</dbReference>